<gene>
    <name evidence="1" type="primary">murA</name>
    <name type="synonym">murZ</name>
    <name type="ordered locus">BPP4265</name>
</gene>
<proteinExistence type="inferred from homology"/>
<keyword id="KW-0131">Cell cycle</keyword>
<keyword id="KW-0132">Cell division</keyword>
<keyword id="KW-0133">Cell shape</keyword>
<keyword id="KW-0961">Cell wall biogenesis/degradation</keyword>
<keyword id="KW-0963">Cytoplasm</keyword>
<keyword id="KW-0573">Peptidoglycan synthesis</keyword>
<keyword id="KW-0670">Pyruvate</keyword>
<keyword id="KW-0808">Transferase</keyword>
<dbReference type="EC" id="2.5.1.7" evidence="1"/>
<dbReference type="EMBL" id="BX640436">
    <property type="protein sequence ID" value="CAE39544.1"/>
    <property type="molecule type" value="Genomic_DNA"/>
</dbReference>
<dbReference type="RefSeq" id="WP_010929469.1">
    <property type="nucleotide sequence ID" value="NC_002928.3"/>
</dbReference>
<dbReference type="SMR" id="Q7W2Y6"/>
<dbReference type="GeneID" id="93206062"/>
<dbReference type="KEGG" id="bpa:BPP4265"/>
<dbReference type="HOGENOM" id="CLU_027387_0_0_4"/>
<dbReference type="UniPathway" id="UPA00219"/>
<dbReference type="Proteomes" id="UP000001421">
    <property type="component" value="Chromosome"/>
</dbReference>
<dbReference type="GO" id="GO:0005737">
    <property type="term" value="C:cytoplasm"/>
    <property type="evidence" value="ECO:0007669"/>
    <property type="project" value="UniProtKB-SubCell"/>
</dbReference>
<dbReference type="GO" id="GO:0008760">
    <property type="term" value="F:UDP-N-acetylglucosamine 1-carboxyvinyltransferase activity"/>
    <property type="evidence" value="ECO:0007669"/>
    <property type="project" value="UniProtKB-UniRule"/>
</dbReference>
<dbReference type="GO" id="GO:0051301">
    <property type="term" value="P:cell division"/>
    <property type="evidence" value="ECO:0007669"/>
    <property type="project" value="UniProtKB-KW"/>
</dbReference>
<dbReference type="GO" id="GO:0071555">
    <property type="term" value="P:cell wall organization"/>
    <property type="evidence" value="ECO:0007669"/>
    <property type="project" value="UniProtKB-KW"/>
</dbReference>
<dbReference type="GO" id="GO:0009252">
    <property type="term" value="P:peptidoglycan biosynthetic process"/>
    <property type="evidence" value="ECO:0007669"/>
    <property type="project" value="UniProtKB-UniRule"/>
</dbReference>
<dbReference type="GO" id="GO:0008360">
    <property type="term" value="P:regulation of cell shape"/>
    <property type="evidence" value="ECO:0007669"/>
    <property type="project" value="UniProtKB-KW"/>
</dbReference>
<dbReference type="GO" id="GO:0019277">
    <property type="term" value="P:UDP-N-acetylgalactosamine biosynthetic process"/>
    <property type="evidence" value="ECO:0007669"/>
    <property type="project" value="InterPro"/>
</dbReference>
<dbReference type="CDD" id="cd01555">
    <property type="entry name" value="UdpNAET"/>
    <property type="match status" value="1"/>
</dbReference>
<dbReference type="FunFam" id="3.65.10.10:FF:000001">
    <property type="entry name" value="UDP-N-acetylglucosamine 1-carboxyvinyltransferase"/>
    <property type="match status" value="1"/>
</dbReference>
<dbReference type="Gene3D" id="3.65.10.10">
    <property type="entry name" value="Enolpyruvate transferase domain"/>
    <property type="match status" value="2"/>
</dbReference>
<dbReference type="HAMAP" id="MF_00111">
    <property type="entry name" value="MurA"/>
    <property type="match status" value="1"/>
</dbReference>
<dbReference type="InterPro" id="IPR001986">
    <property type="entry name" value="Enolpyruvate_Tfrase_dom"/>
</dbReference>
<dbReference type="InterPro" id="IPR036968">
    <property type="entry name" value="Enolpyruvate_Tfrase_sf"/>
</dbReference>
<dbReference type="InterPro" id="IPR050068">
    <property type="entry name" value="MurA_subfamily"/>
</dbReference>
<dbReference type="InterPro" id="IPR013792">
    <property type="entry name" value="RNA3'P_cycl/enolpyr_Trfase_a/b"/>
</dbReference>
<dbReference type="InterPro" id="IPR005750">
    <property type="entry name" value="UDP_GlcNAc_COvinyl_MurA"/>
</dbReference>
<dbReference type="NCBIfam" id="TIGR01072">
    <property type="entry name" value="murA"/>
    <property type="match status" value="1"/>
</dbReference>
<dbReference type="NCBIfam" id="NF006873">
    <property type="entry name" value="PRK09369.1"/>
    <property type="match status" value="1"/>
</dbReference>
<dbReference type="PANTHER" id="PTHR43783">
    <property type="entry name" value="UDP-N-ACETYLGLUCOSAMINE 1-CARBOXYVINYLTRANSFERASE"/>
    <property type="match status" value="1"/>
</dbReference>
<dbReference type="PANTHER" id="PTHR43783:SF1">
    <property type="entry name" value="UDP-N-ACETYLGLUCOSAMINE 1-CARBOXYVINYLTRANSFERASE"/>
    <property type="match status" value="1"/>
</dbReference>
<dbReference type="Pfam" id="PF00275">
    <property type="entry name" value="EPSP_synthase"/>
    <property type="match status" value="1"/>
</dbReference>
<dbReference type="SUPFAM" id="SSF55205">
    <property type="entry name" value="EPT/RTPC-like"/>
    <property type="match status" value="1"/>
</dbReference>
<name>MURA_BORPA</name>
<organism>
    <name type="scientific">Bordetella parapertussis (strain 12822 / ATCC BAA-587 / NCTC 13253)</name>
    <dbReference type="NCBI Taxonomy" id="257311"/>
    <lineage>
        <taxon>Bacteria</taxon>
        <taxon>Pseudomonadati</taxon>
        <taxon>Pseudomonadota</taxon>
        <taxon>Betaproteobacteria</taxon>
        <taxon>Burkholderiales</taxon>
        <taxon>Alcaligenaceae</taxon>
        <taxon>Bordetella</taxon>
    </lineage>
</organism>
<comment type="function">
    <text evidence="1">Cell wall formation. Adds enolpyruvyl to UDP-N-acetylglucosamine.</text>
</comment>
<comment type="catalytic activity">
    <reaction evidence="1">
        <text>phosphoenolpyruvate + UDP-N-acetyl-alpha-D-glucosamine = UDP-N-acetyl-3-O-(1-carboxyvinyl)-alpha-D-glucosamine + phosphate</text>
        <dbReference type="Rhea" id="RHEA:18681"/>
        <dbReference type="ChEBI" id="CHEBI:43474"/>
        <dbReference type="ChEBI" id="CHEBI:57705"/>
        <dbReference type="ChEBI" id="CHEBI:58702"/>
        <dbReference type="ChEBI" id="CHEBI:68483"/>
        <dbReference type="EC" id="2.5.1.7"/>
    </reaction>
</comment>
<comment type="pathway">
    <text evidence="1">Cell wall biogenesis; peptidoglycan biosynthesis.</text>
</comment>
<comment type="subcellular location">
    <subcellularLocation>
        <location evidence="1">Cytoplasm</location>
    </subcellularLocation>
</comment>
<comment type="similarity">
    <text evidence="1">Belongs to the EPSP synthase family. MurA subfamily.</text>
</comment>
<accession>Q7W2Y6</accession>
<sequence>MDKLRITGGSPLRGEVTVSGAKNAALPILCASLLTAEPLVLGNVPQLNDTSTTLRLLGRMGVRAERAGDGTVTLQADQVDNLEAPYELVKTMRASILVLGPLLARFGQARVSLPGGCAIGQRPVDQHIKGLAALGAEIEIEHGFVVARATRLKGASIRTDMVTVTGTENLLMAAVLAEGQTVLENAAREPEVVDLAELLIKMGARIQGHGTDRIVVDGVARLHGARHDVIADRIEAGTFLCAVGAAGGDITLRGAAPDTMGATLDKLVEAGLTIETGPDWIRGAMHGRPCAVGARTHEYPGFATDMQAQLMALDTVADGTAVIVENIFENRYMHVQELCRLGADIDIDGHTAVVRGVARLSGATVMATDLRASASLVIAGLAAEGETLVDRIYHLDRGYDRMEVKLRALGASIQRVTGKETA</sequence>
<protein>
    <recommendedName>
        <fullName evidence="1">UDP-N-acetylglucosamine 1-carboxyvinyltransferase</fullName>
        <ecNumber evidence="1">2.5.1.7</ecNumber>
    </recommendedName>
    <alternativeName>
        <fullName evidence="1">Enoylpyruvate transferase</fullName>
    </alternativeName>
    <alternativeName>
        <fullName evidence="1">UDP-N-acetylglucosamine enolpyruvyl transferase</fullName>
        <shortName evidence="1">EPT</shortName>
    </alternativeName>
</protein>
<reference key="1">
    <citation type="journal article" date="2003" name="Nat. Genet.">
        <title>Comparative analysis of the genome sequences of Bordetella pertussis, Bordetella parapertussis and Bordetella bronchiseptica.</title>
        <authorList>
            <person name="Parkhill J."/>
            <person name="Sebaihia M."/>
            <person name="Preston A."/>
            <person name="Murphy L.D."/>
            <person name="Thomson N.R."/>
            <person name="Harris D.E."/>
            <person name="Holden M.T.G."/>
            <person name="Churcher C.M."/>
            <person name="Bentley S.D."/>
            <person name="Mungall K.L."/>
            <person name="Cerdeno-Tarraga A.-M."/>
            <person name="Temple L."/>
            <person name="James K.D."/>
            <person name="Harris B."/>
            <person name="Quail M.A."/>
            <person name="Achtman M."/>
            <person name="Atkin R."/>
            <person name="Baker S."/>
            <person name="Basham D."/>
            <person name="Bason N."/>
            <person name="Cherevach I."/>
            <person name="Chillingworth T."/>
            <person name="Collins M."/>
            <person name="Cronin A."/>
            <person name="Davis P."/>
            <person name="Doggett J."/>
            <person name="Feltwell T."/>
            <person name="Goble A."/>
            <person name="Hamlin N."/>
            <person name="Hauser H."/>
            <person name="Holroyd S."/>
            <person name="Jagels K."/>
            <person name="Leather S."/>
            <person name="Moule S."/>
            <person name="Norberczak H."/>
            <person name="O'Neil S."/>
            <person name="Ormond D."/>
            <person name="Price C."/>
            <person name="Rabbinowitsch E."/>
            <person name="Rutter S."/>
            <person name="Sanders M."/>
            <person name="Saunders D."/>
            <person name="Seeger K."/>
            <person name="Sharp S."/>
            <person name="Simmonds M."/>
            <person name="Skelton J."/>
            <person name="Squares R."/>
            <person name="Squares S."/>
            <person name="Stevens K."/>
            <person name="Unwin L."/>
            <person name="Whitehead S."/>
            <person name="Barrell B.G."/>
            <person name="Maskell D.J."/>
        </authorList>
    </citation>
    <scope>NUCLEOTIDE SEQUENCE [LARGE SCALE GENOMIC DNA]</scope>
    <source>
        <strain>12822 / ATCC BAA-587 / NCTC 13253</strain>
    </source>
</reference>
<feature type="chain" id="PRO_0000231175" description="UDP-N-acetylglucosamine 1-carboxyvinyltransferase">
    <location>
        <begin position="1"/>
        <end position="422"/>
    </location>
</feature>
<feature type="active site" description="Proton donor" evidence="1">
    <location>
        <position position="117"/>
    </location>
</feature>
<feature type="binding site" evidence="1">
    <location>
        <begin position="22"/>
        <end position="23"/>
    </location>
    <ligand>
        <name>phosphoenolpyruvate</name>
        <dbReference type="ChEBI" id="CHEBI:58702"/>
    </ligand>
</feature>
<feature type="binding site" evidence="1">
    <location>
        <position position="93"/>
    </location>
    <ligand>
        <name>UDP-N-acetyl-alpha-D-glucosamine</name>
        <dbReference type="ChEBI" id="CHEBI:57705"/>
    </ligand>
</feature>
<feature type="binding site" evidence="1">
    <location>
        <begin position="122"/>
        <end position="126"/>
    </location>
    <ligand>
        <name>UDP-N-acetyl-alpha-D-glucosamine</name>
        <dbReference type="ChEBI" id="CHEBI:57705"/>
    </ligand>
</feature>
<feature type="binding site" evidence="1">
    <location>
        <position position="305"/>
    </location>
    <ligand>
        <name>UDP-N-acetyl-alpha-D-glucosamine</name>
        <dbReference type="ChEBI" id="CHEBI:57705"/>
    </ligand>
</feature>
<feature type="binding site" evidence="1">
    <location>
        <position position="327"/>
    </location>
    <ligand>
        <name>UDP-N-acetyl-alpha-D-glucosamine</name>
        <dbReference type="ChEBI" id="CHEBI:57705"/>
    </ligand>
</feature>
<feature type="modified residue" description="2-(S-cysteinyl)pyruvic acid O-phosphothioketal" evidence="1">
    <location>
        <position position="117"/>
    </location>
</feature>
<evidence type="ECO:0000255" key="1">
    <source>
        <dbReference type="HAMAP-Rule" id="MF_00111"/>
    </source>
</evidence>